<reference key="1">
    <citation type="journal article" date="2010" name="PLoS ONE">
        <title>The complete genome sequence of Cupriavidus metallidurans strain CH34, a master survivalist in harsh and anthropogenic environments.</title>
        <authorList>
            <person name="Janssen P.J."/>
            <person name="Van Houdt R."/>
            <person name="Moors H."/>
            <person name="Monsieurs P."/>
            <person name="Morin N."/>
            <person name="Michaux A."/>
            <person name="Benotmane M.A."/>
            <person name="Leys N."/>
            <person name="Vallaeys T."/>
            <person name="Lapidus A."/>
            <person name="Monchy S."/>
            <person name="Medigue C."/>
            <person name="Taghavi S."/>
            <person name="McCorkle S."/>
            <person name="Dunn J."/>
            <person name="van der Lelie D."/>
            <person name="Mergeay M."/>
        </authorList>
    </citation>
    <scope>NUCLEOTIDE SEQUENCE [LARGE SCALE GENOMIC DNA]</scope>
    <source>
        <strain>ATCC 43123 / DSM 2839 / NBRC 102507 / CH34</strain>
    </source>
</reference>
<sequence length="169" mass="18183">MDHGFYESNLDGEGLRIGIVQARFNEPVCDELREACMAELKKLGVEGEDTLLVTVPGALEVPLALQKMAESGQFDALVALGAVVRGETYHFELVSNESGAGITRVGLDFNVPIANGILTVDTDAQAHARTREKGRDCARAAVEMANLVVALDSLREHGAEDAEDEEDDE</sequence>
<protein>
    <recommendedName>
        <fullName evidence="1">6,7-dimethyl-8-ribityllumazine synthase</fullName>
        <shortName evidence="1">DMRL synthase</shortName>
        <shortName evidence="1">LS</shortName>
        <shortName evidence="1">Lumazine synthase</shortName>
        <ecNumber evidence="1">2.5.1.78</ecNumber>
    </recommendedName>
</protein>
<accession>Q1LJV9</accession>
<keyword id="KW-1185">Reference proteome</keyword>
<keyword id="KW-0686">Riboflavin biosynthesis</keyword>
<keyword id="KW-0808">Transferase</keyword>
<proteinExistence type="inferred from homology"/>
<dbReference type="EC" id="2.5.1.78" evidence="1"/>
<dbReference type="EMBL" id="CP000352">
    <property type="protein sequence ID" value="ABF09567.1"/>
    <property type="molecule type" value="Genomic_DNA"/>
</dbReference>
<dbReference type="RefSeq" id="WP_011517267.1">
    <property type="nucleotide sequence ID" value="NC_007973.1"/>
</dbReference>
<dbReference type="SMR" id="Q1LJV9"/>
<dbReference type="STRING" id="266264.Rmet_2694"/>
<dbReference type="KEGG" id="rme:Rmet_2694"/>
<dbReference type="eggNOG" id="COG0054">
    <property type="taxonomic scope" value="Bacteria"/>
</dbReference>
<dbReference type="HOGENOM" id="CLU_089358_1_2_4"/>
<dbReference type="UniPathway" id="UPA00275">
    <property type="reaction ID" value="UER00404"/>
</dbReference>
<dbReference type="Proteomes" id="UP000002429">
    <property type="component" value="Chromosome"/>
</dbReference>
<dbReference type="GO" id="GO:0005829">
    <property type="term" value="C:cytosol"/>
    <property type="evidence" value="ECO:0007669"/>
    <property type="project" value="TreeGrafter"/>
</dbReference>
<dbReference type="GO" id="GO:0009349">
    <property type="term" value="C:riboflavin synthase complex"/>
    <property type="evidence" value="ECO:0007669"/>
    <property type="project" value="InterPro"/>
</dbReference>
<dbReference type="GO" id="GO:0000906">
    <property type="term" value="F:6,7-dimethyl-8-ribityllumazine synthase activity"/>
    <property type="evidence" value="ECO:0007669"/>
    <property type="project" value="UniProtKB-UniRule"/>
</dbReference>
<dbReference type="GO" id="GO:0009231">
    <property type="term" value="P:riboflavin biosynthetic process"/>
    <property type="evidence" value="ECO:0007669"/>
    <property type="project" value="UniProtKB-UniRule"/>
</dbReference>
<dbReference type="CDD" id="cd09209">
    <property type="entry name" value="Lumazine_synthase-I"/>
    <property type="match status" value="1"/>
</dbReference>
<dbReference type="Gene3D" id="3.40.50.960">
    <property type="entry name" value="Lumazine/riboflavin synthase"/>
    <property type="match status" value="1"/>
</dbReference>
<dbReference type="HAMAP" id="MF_00178">
    <property type="entry name" value="Lumazine_synth"/>
    <property type="match status" value="1"/>
</dbReference>
<dbReference type="InterPro" id="IPR034964">
    <property type="entry name" value="LS"/>
</dbReference>
<dbReference type="InterPro" id="IPR002180">
    <property type="entry name" value="LS/RS"/>
</dbReference>
<dbReference type="InterPro" id="IPR036467">
    <property type="entry name" value="LS/RS_sf"/>
</dbReference>
<dbReference type="NCBIfam" id="TIGR00114">
    <property type="entry name" value="lumazine-synth"/>
    <property type="match status" value="1"/>
</dbReference>
<dbReference type="PANTHER" id="PTHR21058:SF0">
    <property type="entry name" value="6,7-DIMETHYL-8-RIBITYLLUMAZINE SYNTHASE"/>
    <property type="match status" value="1"/>
</dbReference>
<dbReference type="PANTHER" id="PTHR21058">
    <property type="entry name" value="6,7-DIMETHYL-8-RIBITYLLUMAZINE SYNTHASE DMRL SYNTHASE LUMAZINE SYNTHASE"/>
    <property type="match status" value="1"/>
</dbReference>
<dbReference type="Pfam" id="PF00885">
    <property type="entry name" value="DMRL_synthase"/>
    <property type="match status" value="1"/>
</dbReference>
<dbReference type="SUPFAM" id="SSF52121">
    <property type="entry name" value="Lumazine synthase"/>
    <property type="match status" value="1"/>
</dbReference>
<feature type="chain" id="PRO_1000040498" description="6,7-dimethyl-8-ribityllumazine synthase">
    <location>
        <begin position="1"/>
        <end position="169"/>
    </location>
</feature>
<feature type="active site" description="Proton donor" evidence="1">
    <location>
        <position position="90"/>
    </location>
</feature>
<feature type="binding site" evidence="1">
    <location>
        <position position="24"/>
    </location>
    <ligand>
        <name>5-amino-6-(D-ribitylamino)uracil</name>
        <dbReference type="ChEBI" id="CHEBI:15934"/>
    </ligand>
</feature>
<feature type="binding site" evidence="1">
    <location>
        <begin position="58"/>
        <end position="60"/>
    </location>
    <ligand>
        <name>5-amino-6-(D-ribitylamino)uracil</name>
        <dbReference type="ChEBI" id="CHEBI:15934"/>
    </ligand>
</feature>
<feature type="binding site" evidence="1">
    <location>
        <begin position="82"/>
        <end position="84"/>
    </location>
    <ligand>
        <name>5-amino-6-(D-ribitylamino)uracil</name>
        <dbReference type="ChEBI" id="CHEBI:15934"/>
    </ligand>
</feature>
<feature type="binding site" evidence="1">
    <location>
        <begin position="87"/>
        <end position="88"/>
    </location>
    <ligand>
        <name>(2S)-2-hydroxy-3-oxobutyl phosphate</name>
        <dbReference type="ChEBI" id="CHEBI:58830"/>
    </ligand>
</feature>
<feature type="binding site" evidence="1">
    <location>
        <position position="115"/>
    </location>
    <ligand>
        <name>5-amino-6-(D-ribitylamino)uracil</name>
        <dbReference type="ChEBI" id="CHEBI:15934"/>
    </ligand>
</feature>
<feature type="binding site" evidence="1">
    <location>
        <position position="129"/>
    </location>
    <ligand>
        <name>(2S)-2-hydroxy-3-oxobutyl phosphate</name>
        <dbReference type="ChEBI" id="CHEBI:58830"/>
    </ligand>
</feature>
<evidence type="ECO:0000255" key="1">
    <source>
        <dbReference type="HAMAP-Rule" id="MF_00178"/>
    </source>
</evidence>
<name>RISB_CUPMC</name>
<organism>
    <name type="scientific">Cupriavidus metallidurans (strain ATCC 43123 / DSM 2839 / NBRC 102507 / CH34)</name>
    <name type="common">Ralstonia metallidurans</name>
    <dbReference type="NCBI Taxonomy" id="266264"/>
    <lineage>
        <taxon>Bacteria</taxon>
        <taxon>Pseudomonadati</taxon>
        <taxon>Pseudomonadota</taxon>
        <taxon>Betaproteobacteria</taxon>
        <taxon>Burkholderiales</taxon>
        <taxon>Burkholderiaceae</taxon>
        <taxon>Cupriavidus</taxon>
    </lineage>
</organism>
<comment type="function">
    <text evidence="1">Catalyzes the formation of 6,7-dimethyl-8-ribityllumazine by condensation of 5-amino-6-(D-ribitylamino)uracil with 3,4-dihydroxy-2-butanone 4-phosphate. This is the penultimate step in the biosynthesis of riboflavin.</text>
</comment>
<comment type="catalytic activity">
    <reaction evidence="1">
        <text>(2S)-2-hydroxy-3-oxobutyl phosphate + 5-amino-6-(D-ribitylamino)uracil = 6,7-dimethyl-8-(1-D-ribityl)lumazine + phosphate + 2 H2O + H(+)</text>
        <dbReference type="Rhea" id="RHEA:26152"/>
        <dbReference type="ChEBI" id="CHEBI:15377"/>
        <dbReference type="ChEBI" id="CHEBI:15378"/>
        <dbReference type="ChEBI" id="CHEBI:15934"/>
        <dbReference type="ChEBI" id="CHEBI:43474"/>
        <dbReference type="ChEBI" id="CHEBI:58201"/>
        <dbReference type="ChEBI" id="CHEBI:58830"/>
        <dbReference type="EC" id="2.5.1.78"/>
    </reaction>
</comment>
<comment type="pathway">
    <text evidence="1">Cofactor biosynthesis; riboflavin biosynthesis; riboflavin from 2-hydroxy-3-oxobutyl phosphate and 5-amino-6-(D-ribitylamino)uracil: step 1/2.</text>
</comment>
<comment type="similarity">
    <text evidence="1">Belongs to the DMRL synthase family.</text>
</comment>
<gene>
    <name evidence="1" type="primary">ribH</name>
    <name type="ordered locus">Rmet_2694</name>
</gene>